<gene>
    <name evidence="6" type="primary">hpr-9</name>
    <name evidence="6" type="ORF">Y39A1A.23</name>
</gene>
<feature type="chain" id="PRO_0000441109" description="Cell cycle checkpoint protein hpr-9">
    <location>
        <begin position="1"/>
        <end position="521"/>
    </location>
</feature>
<feature type="region of interest" description="Disordered" evidence="1">
    <location>
        <begin position="1"/>
        <end position="20"/>
    </location>
</feature>
<feature type="region of interest" description="Disordered" evidence="1">
    <location>
        <begin position="318"/>
        <end position="375"/>
    </location>
</feature>
<feature type="region of interest" description="Disordered" evidence="1">
    <location>
        <begin position="492"/>
        <end position="521"/>
    </location>
</feature>
<feature type="compositionally biased region" description="Polar residues" evidence="1">
    <location>
        <begin position="355"/>
        <end position="370"/>
    </location>
</feature>
<feature type="compositionally biased region" description="Polar residues" evidence="1">
    <location>
        <begin position="493"/>
        <end position="504"/>
    </location>
</feature>
<comment type="function">
    <text evidence="4">May be a component of the 9-1-1 cell-cycle checkpoint response complex that plays a major role in DNA repair.</text>
</comment>
<comment type="subunit">
    <text evidence="4">Putative component of the toroidal 9-1-1 (RAD9-RAD1-HUS1) complex, composed of hpr-9, mrt-2 and hus-1 (Probable).</text>
</comment>
<comment type="disruption phenotype">
    <text evidence="2">RNAi-mediated knockdown disrupts hus-1 localization to the nucleus.</text>
</comment>
<comment type="similarity">
    <text evidence="3">Belongs to the rad9 family.</text>
</comment>
<organism evidence="5">
    <name type="scientific">Caenorhabditis elegans</name>
    <dbReference type="NCBI Taxonomy" id="6239"/>
    <lineage>
        <taxon>Eukaryota</taxon>
        <taxon>Metazoa</taxon>
        <taxon>Ecdysozoa</taxon>
        <taxon>Nematoda</taxon>
        <taxon>Chromadorea</taxon>
        <taxon>Rhabditida</taxon>
        <taxon>Rhabditina</taxon>
        <taxon>Rhabditomorpha</taxon>
        <taxon>Rhabditoidea</taxon>
        <taxon>Rhabditidae</taxon>
        <taxon>Peloderinae</taxon>
        <taxon>Caenorhabditis</taxon>
    </lineage>
</organism>
<evidence type="ECO:0000256" key="1">
    <source>
        <dbReference type="SAM" id="MobiDB-lite"/>
    </source>
</evidence>
<evidence type="ECO:0000269" key="2">
    <source>
    </source>
</evidence>
<evidence type="ECO:0000305" key="3"/>
<evidence type="ECO:0000305" key="4">
    <source>
    </source>
</evidence>
<evidence type="ECO:0000312" key="5">
    <source>
        <dbReference type="Proteomes" id="UP000001940"/>
    </source>
</evidence>
<evidence type="ECO:0000312" key="6">
    <source>
        <dbReference type="WormBase" id="Y39A1A.23a"/>
    </source>
</evidence>
<sequence length="521" mass="59462">MQAIHENYTDNPSSSITRERQHEDMKGAQFVVQSNLKIMSRSIAALSKISEDVLIEVSEGGLFFKTVNRSKFCVFRFAPEFFNACDVSMINKKAVNICRLSMKSAQRIFKGVAFGEKNFVGCEFRIDPKAERMMVKLQMNYDIERTIHAKLREMGSMLHKPTYNRSGCRNITVVFASTLLPIFVQMKGDIEVTMKVTDDGLTIRNFHSLDGVTMFNMGVEKGAKKVKTETTITCEKLTRHKIQIPVEFSFSIKEFLSIVTFADQLGSEVCMYYDLPGKPLIVSIEAHPNFDIELALATMGSDDEIDLDGGILKETMAQHEEEEDKSTAHSSSSRRKSKAIDTSSSGTQKSKKCSESLSQEETTRSQSLPSRNRFVPEIPVAEQSWRDREVTVYEQREPSPDLQIVEEVMEIDNQPIVTRTIKEEHSVEQAMQDVSIETIPVETPEENIIPVEVEMLEEPEQEDQEIFKIPQPKRRKTAEDDRNRKIRRILMGTETTSKMRMSQQFDKRLGPLVSDTQYESR</sequence>
<reference evidence="5" key="1">
    <citation type="journal article" date="1998" name="Science">
        <title>Genome sequence of the nematode C. elegans: a platform for investigating biology.</title>
        <authorList>
            <consortium name="The C. elegans sequencing consortium"/>
        </authorList>
    </citation>
    <scope>NUCLEOTIDE SEQUENCE [LARGE SCALE GENOMIC DNA]</scope>
    <source>
        <strain evidence="5">Bristol N2</strain>
    </source>
</reference>
<reference evidence="3" key="2">
    <citation type="journal article" date="2002" name="Curr. Biol.">
        <title>Caenorhabditis elegans HUS-1 is a DNA damage checkpoint protein required for genome stability and EGL-1-mediated apoptosis.</title>
        <authorList>
            <person name="Hofmann E.R."/>
            <person name="Milstein S."/>
            <person name="Boulton S.J."/>
            <person name="Ye M."/>
            <person name="Hofmann J.J."/>
            <person name="Stergiou L."/>
            <person name="Gartner A."/>
            <person name="Vidal M."/>
            <person name="Hengartner M.O."/>
        </authorList>
    </citation>
    <scope>FUNCTION</scope>
    <scope>IDENTIFICATION IN THE 9-1-1 COMPLEX</scope>
    <scope>DISRUPTION PHENOTYPE</scope>
</reference>
<keyword id="KW-1185">Reference proteome</keyword>
<name>HPR9_CAEEL</name>
<dbReference type="EMBL" id="BX284603">
    <property type="protein sequence ID" value="CAC42372.3"/>
    <property type="molecule type" value="Genomic_DNA"/>
</dbReference>
<dbReference type="RefSeq" id="NP_499342.3">
    <property type="nucleotide sequence ID" value="NM_066941.6"/>
</dbReference>
<dbReference type="SMR" id="Q95Q27"/>
<dbReference type="ComplexPortal" id="CPX-1615">
    <property type="entry name" value="Checkpoint clamp complex"/>
</dbReference>
<dbReference type="FunCoup" id="Q95Q27">
    <property type="interactions" value="1644"/>
</dbReference>
<dbReference type="IntAct" id="Q95Q27">
    <property type="interactions" value="2"/>
</dbReference>
<dbReference type="MINT" id="Q95Q27"/>
<dbReference type="STRING" id="6239.Y39A1A.23a.1"/>
<dbReference type="PaxDb" id="6239-Y39A1A.23.1"/>
<dbReference type="EnsemblMetazoa" id="Y39A1A.23a.1">
    <property type="protein sequence ID" value="Y39A1A.23a.1"/>
    <property type="gene ID" value="WBGene00001997"/>
</dbReference>
<dbReference type="GeneID" id="176483"/>
<dbReference type="KEGG" id="cel:CELE_Y39A1A.23"/>
<dbReference type="UCSC" id="Y39A1A.23.1">
    <property type="organism name" value="c. elegans"/>
</dbReference>
<dbReference type="AGR" id="WB:WBGene00001997"/>
<dbReference type="CTD" id="176483"/>
<dbReference type="WormBase" id="Y39A1A.23a">
    <property type="protein sequence ID" value="CE51732"/>
    <property type="gene ID" value="WBGene00001997"/>
    <property type="gene designation" value="hpr-9"/>
</dbReference>
<dbReference type="eggNOG" id="KOG2810">
    <property type="taxonomic scope" value="Eukaryota"/>
</dbReference>
<dbReference type="GeneTree" id="ENSGT00390000005767"/>
<dbReference type="HOGENOM" id="CLU_479993_0_0_1"/>
<dbReference type="InParanoid" id="Q95Q27"/>
<dbReference type="OrthoDB" id="60092at2759"/>
<dbReference type="Reactome" id="R-CEL-176187">
    <property type="pathway name" value="Activation of ATR in response to replication stress"/>
</dbReference>
<dbReference type="Reactome" id="R-CEL-5693607">
    <property type="pathway name" value="Processing of DNA double-strand break ends"/>
</dbReference>
<dbReference type="PRO" id="PR:Q95Q27"/>
<dbReference type="Proteomes" id="UP000001940">
    <property type="component" value="Chromosome III"/>
</dbReference>
<dbReference type="Bgee" id="WBGene00001997">
    <property type="expression patterns" value="Expressed in germ line (C elegans) and 4 other cell types or tissues"/>
</dbReference>
<dbReference type="ExpressionAtlas" id="Q95Q27">
    <property type="expression patterns" value="baseline and differential"/>
</dbReference>
<dbReference type="GO" id="GO:0030896">
    <property type="term" value="C:checkpoint clamp complex"/>
    <property type="evidence" value="ECO:0000318"/>
    <property type="project" value="GO_Central"/>
</dbReference>
<dbReference type="GO" id="GO:0005634">
    <property type="term" value="C:nucleus"/>
    <property type="evidence" value="ECO:0000303"/>
    <property type="project" value="ComplexPortal"/>
</dbReference>
<dbReference type="GO" id="GO:0071479">
    <property type="term" value="P:cellular response to ionizing radiation"/>
    <property type="evidence" value="ECO:0000318"/>
    <property type="project" value="GO_Central"/>
</dbReference>
<dbReference type="GO" id="GO:0000077">
    <property type="term" value="P:DNA damage checkpoint signaling"/>
    <property type="evidence" value="ECO:0000303"/>
    <property type="project" value="ComplexPortal"/>
</dbReference>
<dbReference type="GO" id="GO:0006281">
    <property type="term" value="P:DNA repair"/>
    <property type="evidence" value="ECO:0000318"/>
    <property type="project" value="GO_Central"/>
</dbReference>
<dbReference type="GO" id="GO:0000076">
    <property type="term" value="P:DNA replication checkpoint signaling"/>
    <property type="evidence" value="ECO:0000318"/>
    <property type="project" value="GO_Central"/>
</dbReference>
<dbReference type="GO" id="GO:0031573">
    <property type="term" value="P:mitotic intra-S DNA damage checkpoint signaling"/>
    <property type="evidence" value="ECO:0000318"/>
    <property type="project" value="GO_Central"/>
</dbReference>
<dbReference type="FunFam" id="3.70.10.10:FF:000058">
    <property type="entry name" value="Cell cycle checkpoint protein hpr-9"/>
    <property type="match status" value="1"/>
</dbReference>
<dbReference type="Gene3D" id="3.70.10.10">
    <property type="match status" value="1"/>
</dbReference>
<dbReference type="InterPro" id="IPR046938">
    <property type="entry name" value="DNA_clamp_sf"/>
</dbReference>
<dbReference type="InterPro" id="IPR007268">
    <property type="entry name" value="Rad9/Ddc1"/>
</dbReference>
<dbReference type="PANTHER" id="PTHR15237:SF0">
    <property type="entry name" value="CELL CYCLE CHECKPOINT CONTROL PROTEIN"/>
    <property type="match status" value="1"/>
</dbReference>
<dbReference type="PANTHER" id="PTHR15237">
    <property type="entry name" value="DNA REPAIR PROTEIN RAD9"/>
    <property type="match status" value="1"/>
</dbReference>
<dbReference type="Pfam" id="PF04139">
    <property type="entry name" value="Rad9"/>
    <property type="match status" value="1"/>
</dbReference>
<dbReference type="SUPFAM" id="SSF55979">
    <property type="entry name" value="DNA clamp"/>
    <property type="match status" value="1"/>
</dbReference>
<accession>Q95Q27</accession>
<protein>
    <recommendedName>
        <fullName evidence="3">Cell cycle checkpoint protein hpr-9</fullName>
    </recommendedName>
</protein>
<proteinExistence type="evidence at protein level"/>